<reference key="1">
    <citation type="journal article" date="2013" name="Nature">
        <title>The zebrafish reference genome sequence and its relationship to the human genome.</title>
        <authorList>
            <person name="Howe K."/>
            <person name="Clark M.D."/>
            <person name="Torroja C.F."/>
            <person name="Torrance J."/>
            <person name="Berthelot C."/>
            <person name="Muffato M."/>
            <person name="Collins J.E."/>
            <person name="Humphray S."/>
            <person name="McLaren K."/>
            <person name="Matthews L."/>
            <person name="McLaren S."/>
            <person name="Sealy I."/>
            <person name="Caccamo M."/>
            <person name="Churcher C."/>
            <person name="Scott C."/>
            <person name="Barrett J.C."/>
            <person name="Koch R."/>
            <person name="Rauch G.J."/>
            <person name="White S."/>
            <person name="Chow W."/>
            <person name="Kilian B."/>
            <person name="Quintais L.T."/>
            <person name="Guerra-Assuncao J.A."/>
            <person name="Zhou Y."/>
            <person name="Gu Y."/>
            <person name="Yen J."/>
            <person name="Vogel J.H."/>
            <person name="Eyre T."/>
            <person name="Redmond S."/>
            <person name="Banerjee R."/>
            <person name="Chi J."/>
            <person name="Fu B."/>
            <person name="Langley E."/>
            <person name="Maguire S.F."/>
            <person name="Laird G.K."/>
            <person name="Lloyd D."/>
            <person name="Kenyon E."/>
            <person name="Donaldson S."/>
            <person name="Sehra H."/>
            <person name="Almeida-King J."/>
            <person name="Loveland J."/>
            <person name="Trevanion S."/>
            <person name="Jones M."/>
            <person name="Quail M."/>
            <person name="Willey D."/>
            <person name="Hunt A."/>
            <person name="Burton J."/>
            <person name="Sims S."/>
            <person name="McLay K."/>
            <person name="Plumb B."/>
            <person name="Davis J."/>
            <person name="Clee C."/>
            <person name="Oliver K."/>
            <person name="Clark R."/>
            <person name="Riddle C."/>
            <person name="Elliot D."/>
            <person name="Threadgold G."/>
            <person name="Harden G."/>
            <person name="Ware D."/>
            <person name="Begum S."/>
            <person name="Mortimore B."/>
            <person name="Kerry G."/>
            <person name="Heath P."/>
            <person name="Phillimore B."/>
            <person name="Tracey A."/>
            <person name="Corby N."/>
            <person name="Dunn M."/>
            <person name="Johnson C."/>
            <person name="Wood J."/>
            <person name="Clark S."/>
            <person name="Pelan S."/>
            <person name="Griffiths G."/>
            <person name="Smith M."/>
            <person name="Glithero R."/>
            <person name="Howden P."/>
            <person name="Barker N."/>
            <person name="Lloyd C."/>
            <person name="Stevens C."/>
            <person name="Harley J."/>
            <person name="Holt K."/>
            <person name="Panagiotidis G."/>
            <person name="Lovell J."/>
            <person name="Beasley H."/>
            <person name="Henderson C."/>
            <person name="Gordon D."/>
            <person name="Auger K."/>
            <person name="Wright D."/>
            <person name="Collins J."/>
            <person name="Raisen C."/>
            <person name="Dyer L."/>
            <person name="Leung K."/>
            <person name="Robertson L."/>
            <person name="Ambridge K."/>
            <person name="Leongamornlert D."/>
            <person name="McGuire S."/>
            <person name="Gilderthorp R."/>
            <person name="Griffiths C."/>
            <person name="Manthravadi D."/>
            <person name="Nichol S."/>
            <person name="Barker G."/>
            <person name="Whitehead S."/>
            <person name="Kay M."/>
            <person name="Brown J."/>
            <person name="Murnane C."/>
            <person name="Gray E."/>
            <person name="Humphries M."/>
            <person name="Sycamore N."/>
            <person name="Barker D."/>
            <person name="Saunders D."/>
            <person name="Wallis J."/>
            <person name="Babbage A."/>
            <person name="Hammond S."/>
            <person name="Mashreghi-Mohammadi M."/>
            <person name="Barr L."/>
            <person name="Martin S."/>
            <person name="Wray P."/>
            <person name="Ellington A."/>
            <person name="Matthews N."/>
            <person name="Ellwood M."/>
            <person name="Woodmansey R."/>
            <person name="Clark G."/>
            <person name="Cooper J."/>
            <person name="Tromans A."/>
            <person name="Grafham D."/>
            <person name="Skuce C."/>
            <person name="Pandian R."/>
            <person name="Andrews R."/>
            <person name="Harrison E."/>
            <person name="Kimberley A."/>
            <person name="Garnett J."/>
            <person name="Fosker N."/>
            <person name="Hall R."/>
            <person name="Garner P."/>
            <person name="Kelly D."/>
            <person name="Bird C."/>
            <person name="Palmer S."/>
            <person name="Gehring I."/>
            <person name="Berger A."/>
            <person name="Dooley C.M."/>
            <person name="Ersan-Urun Z."/>
            <person name="Eser C."/>
            <person name="Geiger H."/>
            <person name="Geisler M."/>
            <person name="Karotki L."/>
            <person name="Kirn A."/>
            <person name="Konantz J."/>
            <person name="Konantz M."/>
            <person name="Oberlander M."/>
            <person name="Rudolph-Geiger S."/>
            <person name="Teucke M."/>
            <person name="Lanz C."/>
            <person name="Raddatz G."/>
            <person name="Osoegawa K."/>
            <person name="Zhu B."/>
            <person name="Rapp A."/>
            <person name="Widaa S."/>
            <person name="Langford C."/>
            <person name="Yang F."/>
            <person name="Schuster S.C."/>
            <person name="Carter N.P."/>
            <person name="Harrow J."/>
            <person name="Ning Z."/>
            <person name="Herrero J."/>
            <person name="Searle S.M."/>
            <person name="Enright A."/>
            <person name="Geisler R."/>
            <person name="Plasterk R.H."/>
            <person name="Lee C."/>
            <person name="Westerfield M."/>
            <person name="de Jong P.J."/>
            <person name="Zon L.I."/>
            <person name="Postlethwait J.H."/>
            <person name="Nusslein-Volhard C."/>
            <person name="Hubbard T.J."/>
            <person name="Roest Crollius H."/>
            <person name="Rogers J."/>
            <person name="Stemple D.L."/>
        </authorList>
    </citation>
    <scope>NUCLEOTIDE SEQUENCE [LARGE SCALE GENOMIC DNA]</scope>
    <source>
        <strain>Tuebingen</strain>
    </source>
</reference>
<reference key="2">
    <citation type="journal article" date="2010" name="EMBO J.">
        <title>Pericentrosomal targeting of Rab6 secretory vesicles by Bicaudal-D-related protein 1 (BICDR-1) regulates neuritogenesis.</title>
        <authorList>
            <person name="Schlager M.A."/>
            <person name="Kapitein L.C."/>
            <person name="Grigoriev I."/>
            <person name="Burzynski G.M."/>
            <person name="Wulf P.S."/>
            <person name="Keijzer N."/>
            <person name="de Graaff E."/>
            <person name="Fukuda M."/>
            <person name="Shepherd I.T."/>
            <person name="Akhmanova A."/>
            <person name="Hoogenraad C.C."/>
        </authorList>
    </citation>
    <scope>FUNCTION</scope>
    <scope>TISSUE SPECIFICITY</scope>
</reference>
<organism>
    <name type="scientific">Danio rerio</name>
    <name type="common">Zebrafish</name>
    <name type="synonym">Brachydanio rerio</name>
    <dbReference type="NCBI Taxonomy" id="7955"/>
    <lineage>
        <taxon>Eukaryota</taxon>
        <taxon>Metazoa</taxon>
        <taxon>Chordata</taxon>
        <taxon>Craniata</taxon>
        <taxon>Vertebrata</taxon>
        <taxon>Euteleostomi</taxon>
        <taxon>Actinopterygii</taxon>
        <taxon>Neopterygii</taxon>
        <taxon>Teleostei</taxon>
        <taxon>Ostariophysi</taxon>
        <taxon>Cypriniformes</taxon>
        <taxon>Danionidae</taxon>
        <taxon>Danioninae</taxon>
        <taxon>Danio</taxon>
    </lineage>
</organism>
<name>BICL1_DANRE</name>
<evidence type="ECO:0000250" key="1">
    <source>
        <dbReference type="UniProtKB" id="A0JNT9"/>
    </source>
</evidence>
<evidence type="ECO:0000255" key="2"/>
<evidence type="ECO:0000256" key="3">
    <source>
        <dbReference type="SAM" id="MobiDB-lite"/>
    </source>
</evidence>
<evidence type="ECO:0000269" key="4">
    <source>
    </source>
</evidence>
<evidence type="ECO:0000305" key="5"/>
<feature type="chain" id="PRO_0000394263" description="BICD family-like cargo adapter 1">
    <location>
        <begin position="1"/>
        <end position="569"/>
    </location>
</feature>
<feature type="region of interest" description="Disordered" evidence="3">
    <location>
        <begin position="1"/>
        <end position="36"/>
    </location>
</feature>
<feature type="region of interest" description="Disordered" evidence="3">
    <location>
        <begin position="385"/>
        <end position="405"/>
    </location>
</feature>
<feature type="region of interest" description="Disordered" evidence="3">
    <location>
        <begin position="533"/>
        <end position="554"/>
    </location>
</feature>
<feature type="coiled-coil region" evidence="2">
    <location>
        <begin position="102"/>
        <end position="283"/>
    </location>
</feature>
<feature type="coiled-coil region" evidence="2">
    <location>
        <begin position="458"/>
        <end position="520"/>
    </location>
</feature>
<feature type="short sequence motif" description="CC1 box" evidence="1">
    <location>
        <begin position="97"/>
        <end position="101"/>
    </location>
</feature>
<gene>
    <name type="primary">bicdl1</name>
    <name type="synonym">bicdr1</name>
    <name type="synonym">ccdc64</name>
</gene>
<protein>
    <recommendedName>
        <fullName>BICD family-like cargo adapter 1</fullName>
    </recommendedName>
    <alternativeName>
        <fullName>Bicaudal D-related protein 1</fullName>
        <shortName>BICD-related protein 1</shortName>
        <shortName>BICDR-1</shortName>
    </alternativeName>
    <alternativeName>
        <fullName>Coiled-coil domain-containing protein 64A</fullName>
    </alternativeName>
</protein>
<proteinExistence type="evidence at transcript level"/>
<dbReference type="FunCoup" id="P0CF95">
    <property type="interactions" value="307"/>
</dbReference>
<dbReference type="STRING" id="7955.ENSDARP00000142360"/>
<dbReference type="AGR" id="ZFIN:ZDB-GENE-091204-439"/>
<dbReference type="ZFIN" id="ZDB-GENE-091204-439">
    <property type="gene designation" value="bicdl1"/>
</dbReference>
<dbReference type="InParanoid" id="P0CF95"/>
<dbReference type="PRO" id="PR:P0CF95"/>
<dbReference type="Proteomes" id="UP000000437">
    <property type="component" value="Unplaced"/>
</dbReference>
<dbReference type="GO" id="GO:0005813">
    <property type="term" value="C:centrosome"/>
    <property type="evidence" value="ECO:0000250"/>
    <property type="project" value="UniProtKB"/>
</dbReference>
<dbReference type="GO" id="GO:0005737">
    <property type="term" value="C:cytoplasm"/>
    <property type="evidence" value="ECO:0007669"/>
    <property type="project" value="UniProtKB-KW"/>
</dbReference>
<dbReference type="GO" id="GO:0034452">
    <property type="term" value="F:dynactin binding"/>
    <property type="evidence" value="ECO:0000250"/>
    <property type="project" value="UniProtKB"/>
</dbReference>
<dbReference type="GO" id="GO:0031267">
    <property type="term" value="F:small GTPase binding"/>
    <property type="evidence" value="ECO:0000250"/>
    <property type="project" value="UniProtKB"/>
</dbReference>
<dbReference type="GO" id="GO:0007420">
    <property type="term" value="P:brain development"/>
    <property type="evidence" value="ECO:0000315"/>
    <property type="project" value="ZFIN"/>
</dbReference>
<dbReference type="GO" id="GO:0031076">
    <property type="term" value="P:embryonic camera-type eye development"/>
    <property type="evidence" value="ECO:0000315"/>
    <property type="project" value="ZFIN"/>
</dbReference>
<dbReference type="GO" id="GO:0001654">
    <property type="term" value="P:eye development"/>
    <property type="evidence" value="ECO:0000315"/>
    <property type="project" value="UniProtKB"/>
</dbReference>
<dbReference type="GO" id="GO:0055107">
    <property type="term" value="P:Golgi to secretory granule transport"/>
    <property type="evidence" value="ECO:0000250"/>
    <property type="project" value="UniProtKB"/>
</dbReference>
<dbReference type="GO" id="GO:0010977">
    <property type="term" value="P:negative regulation of neuron projection development"/>
    <property type="evidence" value="ECO:0000316"/>
    <property type="project" value="ZFIN"/>
</dbReference>
<dbReference type="GO" id="GO:0031175">
    <property type="term" value="P:neuron projection development"/>
    <property type="evidence" value="ECO:0000250"/>
    <property type="project" value="UniProtKB"/>
</dbReference>
<dbReference type="GO" id="GO:0047496">
    <property type="term" value="P:vesicle transport along microtubule"/>
    <property type="evidence" value="ECO:0000316"/>
    <property type="project" value="ZFIN"/>
</dbReference>
<dbReference type="InterPro" id="IPR051149">
    <property type="entry name" value="Spindly/BICDR_Dynein_Adapter"/>
</dbReference>
<dbReference type="PANTHER" id="PTHR32123">
    <property type="entry name" value="BICD FAMILY-LIKE CARGO ADAPTER"/>
    <property type="match status" value="1"/>
</dbReference>
<dbReference type="PANTHER" id="PTHR32123:SF12">
    <property type="entry name" value="BICD FAMILY-LIKE CARGO ADAPTER 1"/>
    <property type="match status" value="1"/>
</dbReference>
<comment type="function">
    <text evidence="1 4">Acts as an adapter protein linking the dynein motor complex to various cargos and converts dynein from a non-processive to a highly processive motor in the presence of dynactin. Facilitates the interaction between dynein and dynactin and activates dynein processivity (the ability to move along a microtubule for a long distance without falling off the track). Predominantly recruits 2 dyneins, which increases both the force and speed of the microtubule motor (By similarity). Component of secretory vesicle machinery in developing neurons that acts as a regulator of neurite outgrowth (PubMed:20360680). Regulates the secretory vesicle transport by controlling the accumulation of Rab6-containing secretory vesicles in the pericentrosomal region restricting anterograde secretory transport during the early phase of neuronal differentiation, thereby inhibiting neuritogenesis (By similarity).</text>
</comment>
<comment type="subunit">
    <text evidence="1">Part of a tripartite complex with dynein and dynactin, acts an adapter linking the dynein motor complex and dynactin.</text>
</comment>
<comment type="subcellular location">
    <subcellularLocation>
        <location evidence="1">Cytoplasm</location>
        <location evidence="1">Cytoskeleton</location>
        <location evidence="1">Microtubule organizing center</location>
        <location evidence="1">Centrosome</location>
    </subcellularLocation>
    <text evidence="1">Localizes around the centrosome.</text>
</comment>
<comment type="tissue specificity">
    <text evidence="4">Highly expressed in developing neural tissues and developing eye.</text>
</comment>
<comment type="similarity">
    <text evidence="5">Belongs to the BICDR family.</text>
</comment>
<accession>P0CF95</accession>
<keyword id="KW-0175">Coiled coil</keyword>
<keyword id="KW-0963">Cytoplasm</keyword>
<keyword id="KW-0206">Cytoskeleton</keyword>
<keyword id="KW-0524">Neurogenesis</keyword>
<keyword id="KW-1185">Reference proteome</keyword>
<keyword id="KW-0813">Transport</keyword>
<sequence length="569" mass="65461">MSASCLDLISAPPQPDSDRMDRALNPGRQNSPDTAGELTLLHTAPGGLGMALEEELAMLTGDREDELQESAPETPVSGQDSDLLSLFRQKEKDLVLAAKLGKALLERNQDLTKQYDKMTKDLNDRLELLEQEKHELRRRLESREGEWEGRVAELETDVQHLQGELERHQLQLRDADREKSRAISELSEQNHRLLEQLSRAAEVEKQLSTQVHSLRDDFKEKSISSNQHMTRLETLQAEIRMLSERKQDLERRVCAVLEENQQLQNTVEELRERTLELEKHCHHKDLQKILPETLLTIIKLKTNYSQKKKKTEHLILHTRRAHTHLCRAPSEVQSCMGSLSCVWCIQRRKDCDLFLLQLRLQLWEAYCQVRSICSQLRGNDITDSALSTDSSMDESSETLSAKDVPTGSLHSSLLELRRLTQNLLDGNESTVALLSVEVSSSREENERLRAMTEVHEPNEQLQSAIRDRDEAIAKKKAVEMELAKCKIDIMSLNSBQLLDAIQQKLNLSQQLEAWQDDMHRVIDQQLMDKHQEEWKDPPFSFSRRGAAASRPTQRLADRDKPLFSFFKKN</sequence>